<feature type="initiator methionine" description="Removed" evidence="2">
    <location>
        <position position="1"/>
    </location>
</feature>
<feature type="chain" id="PRO_0000420151" description="NADP-dependent malic enzyme 3">
    <location>
        <begin position="2"/>
        <end position="588"/>
    </location>
</feature>
<feature type="active site" description="Proton donor" evidence="1">
    <location>
        <position position="136"/>
    </location>
</feature>
<feature type="active site" description="Proton acceptor" evidence="1">
    <location>
        <position position="207"/>
    </location>
</feature>
<feature type="binding site" evidence="1">
    <location>
        <position position="189"/>
    </location>
    <ligand>
        <name>NADP(+)</name>
        <dbReference type="ChEBI" id="CHEBI:58349"/>
    </ligand>
</feature>
<feature type="binding site" evidence="1">
    <location>
        <position position="279"/>
    </location>
    <ligand>
        <name>a divalent metal cation</name>
        <dbReference type="ChEBI" id="CHEBI:60240"/>
    </ligand>
</feature>
<feature type="binding site" evidence="1">
    <location>
        <position position="280"/>
    </location>
    <ligand>
        <name>a divalent metal cation</name>
        <dbReference type="ChEBI" id="CHEBI:60240"/>
    </ligand>
</feature>
<feature type="binding site" evidence="1">
    <location>
        <position position="303"/>
    </location>
    <ligand>
        <name>a divalent metal cation</name>
        <dbReference type="ChEBI" id="CHEBI:60240"/>
    </ligand>
</feature>
<feature type="binding site" evidence="1">
    <location>
        <position position="303"/>
    </location>
    <ligand>
        <name>NADP(+)</name>
        <dbReference type="ChEBI" id="CHEBI:58349"/>
    </ligand>
</feature>
<feature type="binding site" evidence="1">
    <location>
        <begin position="332"/>
        <end position="348"/>
    </location>
    <ligand>
        <name>NADP(+)</name>
        <dbReference type="ChEBI" id="CHEBI:58349"/>
    </ligand>
</feature>
<feature type="binding site" evidence="1">
    <location>
        <position position="444"/>
    </location>
    <ligand>
        <name>NADP(+)</name>
        <dbReference type="ChEBI" id="CHEBI:58349"/>
    </ligand>
</feature>
<feature type="site" description="Important for activity" evidence="1">
    <location>
        <position position="303"/>
    </location>
</feature>
<feature type="modified residue" description="N-acetylglycine" evidence="2">
    <location>
        <position position="2"/>
    </location>
</feature>
<comment type="catalytic activity">
    <reaction evidence="3">
        <text>(S)-malate + NADP(+) = pyruvate + CO2 + NADPH</text>
        <dbReference type="Rhea" id="RHEA:18253"/>
        <dbReference type="ChEBI" id="CHEBI:15361"/>
        <dbReference type="ChEBI" id="CHEBI:15589"/>
        <dbReference type="ChEBI" id="CHEBI:16526"/>
        <dbReference type="ChEBI" id="CHEBI:57783"/>
        <dbReference type="ChEBI" id="CHEBI:58349"/>
        <dbReference type="EC" id="1.1.1.40"/>
    </reaction>
</comment>
<comment type="catalytic activity">
    <reaction evidence="3">
        <text>oxaloacetate + H(+) = pyruvate + CO2</text>
        <dbReference type="Rhea" id="RHEA:15641"/>
        <dbReference type="ChEBI" id="CHEBI:15361"/>
        <dbReference type="ChEBI" id="CHEBI:15378"/>
        <dbReference type="ChEBI" id="CHEBI:16452"/>
        <dbReference type="ChEBI" id="CHEBI:16526"/>
        <dbReference type="EC" id="1.1.1.40"/>
    </reaction>
</comment>
<comment type="cofactor">
    <cofactor evidence="1">
        <name>Mg(2+)</name>
        <dbReference type="ChEBI" id="CHEBI:18420"/>
    </cofactor>
    <cofactor evidence="1">
        <name>Mn(2+)</name>
        <dbReference type="ChEBI" id="CHEBI:29035"/>
    </cofactor>
    <text evidence="1">Divalent metal cations. Prefers magnesium or manganese.</text>
</comment>
<comment type="activity regulation">
    <text evidence="4">Slightly activated by succinate and aspartate. Repressed by fumarate, malate, oxaloacetate and glucose.</text>
</comment>
<comment type="biophysicochemical properties">
    <kinetics>
        <KM evidence="3 4">6.5 uM for NADP (at pH 7.5)</KM>
        <KM evidence="3 4">0.83 mM for malate (at pH 7.5)</KM>
        <KM evidence="3 4">5 mM for pyruvate (at pH 7)</KM>
        <text>kcat is 268.1 sec(-1) with NADP and malate as substrates (at pH 7.5). kcat is 237 sec(-1) with pyruvate as substrate (at pH 7).</text>
    </kinetics>
    <phDependence>
        <text evidence="3 4">Optimum pH is 7.7.</text>
    </phDependence>
</comment>
<comment type="subunit">
    <text evidence="3">Homohexamers and homooctamers.</text>
</comment>
<comment type="subcellular location">
    <subcellularLocation>
        <location evidence="4">Cytoplasm</location>
    </subcellularLocation>
</comment>
<comment type="tissue specificity">
    <text evidence="3">Mostly expressed in flowers, and, to a lower extent, in stems. In leaves and stems, restricted to the trichomes and trichome basal cells. Also present in the stipules flanking the base of the inflorescence bract leaves and in the meristematic zone of developing lateral roots. In flowers, present in pollen and the abscission zone of developing siliques.</text>
</comment>
<comment type="developmental stage">
    <text evidence="3">During embryogenesis, present in the embryo at the globular and heart stages. Detected in the central vasculature of the siliques. During germination, only observed in stipules at the shoot apex and restricted to trichomes of the primary leaves.</text>
</comment>
<comment type="similarity">
    <text evidence="5">Belongs to the malic enzymes family.</text>
</comment>
<dbReference type="EC" id="1.1.1.40"/>
<dbReference type="EMBL" id="AF149413">
    <property type="protein sequence ID" value="AAD40139.1"/>
    <property type="molecule type" value="Genomic_DNA"/>
</dbReference>
<dbReference type="EMBL" id="CP002688">
    <property type="protein sequence ID" value="AED93497.1"/>
    <property type="molecule type" value="Genomic_DNA"/>
</dbReference>
<dbReference type="RefSeq" id="NP_197960.1">
    <property type="nucleotide sequence ID" value="NM_122489.3"/>
</dbReference>
<dbReference type="SMR" id="Q9XGZ0"/>
<dbReference type="BioGRID" id="17932">
    <property type="interactions" value="1"/>
</dbReference>
<dbReference type="FunCoup" id="Q9XGZ0">
    <property type="interactions" value="2744"/>
</dbReference>
<dbReference type="STRING" id="3702.Q9XGZ0"/>
<dbReference type="PaxDb" id="3702-AT5G25880.1"/>
<dbReference type="ProteomicsDB" id="232209"/>
<dbReference type="EnsemblPlants" id="AT5G25880.1">
    <property type="protein sequence ID" value="AT5G25880.1"/>
    <property type="gene ID" value="AT5G25880"/>
</dbReference>
<dbReference type="GeneID" id="832657"/>
<dbReference type="Gramene" id="AT5G25880.1">
    <property type="protein sequence ID" value="AT5G25880.1"/>
    <property type="gene ID" value="AT5G25880"/>
</dbReference>
<dbReference type="KEGG" id="ath:AT5G25880"/>
<dbReference type="Araport" id="AT5G25880"/>
<dbReference type="TAIR" id="AT5G25880">
    <property type="gene designation" value="NADP-ME3"/>
</dbReference>
<dbReference type="eggNOG" id="KOG1257">
    <property type="taxonomic scope" value="Eukaryota"/>
</dbReference>
<dbReference type="HOGENOM" id="CLU_011405_5_1_1"/>
<dbReference type="InParanoid" id="Q9XGZ0"/>
<dbReference type="PhylomeDB" id="Q9XGZ0"/>
<dbReference type="BioCyc" id="ARA:AT5G25880-MONOMER"/>
<dbReference type="BRENDA" id="1.1.1.40">
    <property type="organism ID" value="399"/>
</dbReference>
<dbReference type="SABIO-RK" id="Q9XGZ0"/>
<dbReference type="PRO" id="PR:Q9XGZ0"/>
<dbReference type="Proteomes" id="UP000006548">
    <property type="component" value="Chromosome 5"/>
</dbReference>
<dbReference type="ExpressionAtlas" id="Q9XGZ0">
    <property type="expression patterns" value="baseline and differential"/>
</dbReference>
<dbReference type="GO" id="GO:0005829">
    <property type="term" value="C:cytosol"/>
    <property type="evidence" value="ECO:0000314"/>
    <property type="project" value="TAIR"/>
</dbReference>
<dbReference type="GO" id="GO:0009536">
    <property type="term" value="C:plastid"/>
    <property type="evidence" value="ECO:0007005"/>
    <property type="project" value="TAIR"/>
</dbReference>
<dbReference type="GO" id="GO:0004473">
    <property type="term" value="F:malate dehydrogenase (decarboxylating) (NADP+) activity"/>
    <property type="evidence" value="ECO:0000314"/>
    <property type="project" value="TAIR"/>
</dbReference>
<dbReference type="GO" id="GO:0046872">
    <property type="term" value="F:metal ion binding"/>
    <property type="evidence" value="ECO:0007669"/>
    <property type="project" value="UniProtKB-KW"/>
</dbReference>
<dbReference type="GO" id="GO:0051287">
    <property type="term" value="F:NAD binding"/>
    <property type="evidence" value="ECO:0007669"/>
    <property type="project" value="InterPro"/>
</dbReference>
<dbReference type="GO" id="GO:0008948">
    <property type="term" value="F:oxaloacetate decarboxylase activity"/>
    <property type="evidence" value="ECO:0007669"/>
    <property type="project" value="RHEA"/>
</dbReference>
<dbReference type="GO" id="GO:0006108">
    <property type="term" value="P:malate metabolic process"/>
    <property type="evidence" value="ECO:0000314"/>
    <property type="project" value="TAIR"/>
</dbReference>
<dbReference type="CDD" id="cd05312">
    <property type="entry name" value="NAD_bind_1_malic_enz"/>
    <property type="match status" value="1"/>
</dbReference>
<dbReference type="FunFam" id="3.40.50.10380:FF:000002">
    <property type="entry name" value="Malic enzyme"/>
    <property type="match status" value="1"/>
</dbReference>
<dbReference type="FunFam" id="3.40.50.720:FF:000067">
    <property type="entry name" value="Malic enzyme"/>
    <property type="match status" value="1"/>
</dbReference>
<dbReference type="Gene3D" id="3.40.50.10380">
    <property type="entry name" value="Malic enzyme, N-terminal domain"/>
    <property type="match status" value="1"/>
</dbReference>
<dbReference type="Gene3D" id="3.40.50.720">
    <property type="entry name" value="NAD(P)-binding Rossmann-like Domain"/>
    <property type="match status" value="1"/>
</dbReference>
<dbReference type="InterPro" id="IPR046346">
    <property type="entry name" value="Aminoacid_DH-like_N_sf"/>
</dbReference>
<dbReference type="InterPro" id="IPR015884">
    <property type="entry name" value="Malic_enzyme_CS"/>
</dbReference>
<dbReference type="InterPro" id="IPR012301">
    <property type="entry name" value="Malic_N_dom"/>
</dbReference>
<dbReference type="InterPro" id="IPR037062">
    <property type="entry name" value="Malic_N_dom_sf"/>
</dbReference>
<dbReference type="InterPro" id="IPR012302">
    <property type="entry name" value="Malic_NAD-bd"/>
</dbReference>
<dbReference type="InterPro" id="IPR001891">
    <property type="entry name" value="Malic_OxRdtase"/>
</dbReference>
<dbReference type="InterPro" id="IPR036291">
    <property type="entry name" value="NAD(P)-bd_dom_sf"/>
</dbReference>
<dbReference type="NCBIfam" id="NF010052">
    <property type="entry name" value="PRK13529.1"/>
    <property type="match status" value="1"/>
</dbReference>
<dbReference type="PANTHER" id="PTHR23406">
    <property type="entry name" value="MALIC ENZYME-RELATED"/>
    <property type="match status" value="1"/>
</dbReference>
<dbReference type="PANTHER" id="PTHR23406:SF64">
    <property type="entry name" value="NADP-DEPENDENT MALIC ENZYME 3"/>
    <property type="match status" value="1"/>
</dbReference>
<dbReference type="Pfam" id="PF00390">
    <property type="entry name" value="malic"/>
    <property type="match status" value="1"/>
</dbReference>
<dbReference type="Pfam" id="PF03949">
    <property type="entry name" value="Malic_M"/>
    <property type="match status" value="1"/>
</dbReference>
<dbReference type="PIRSF" id="PIRSF000106">
    <property type="entry name" value="ME"/>
    <property type="match status" value="1"/>
</dbReference>
<dbReference type="PRINTS" id="PR00072">
    <property type="entry name" value="MALOXRDTASE"/>
</dbReference>
<dbReference type="SMART" id="SM01274">
    <property type="entry name" value="malic"/>
    <property type="match status" value="1"/>
</dbReference>
<dbReference type="SMART" id="SM00919">
    <property type="entry name" value="Malic_M"/>
    <property type="match status" value="1"/>
</dbReference>
<dbReference type="SUPFAM" id="SSF53223">
    <property type="entry name" value="Aminoacid dehydrogenase-like, N-terminal domain"/>
    <property type="match status" value="1"/>
</dbReference>
<dbReference type="SUPFAM" id="SSF51735">
    <property type="entry name" value="NAD(P)-binding Rossmann-fold domains"/>
    <property type="match status" value="1"/>
</dbReference>
<dbReference type="PROSITE" id="PS00331">
    <property type="entry name" value="MALIC_ENZYMES"/>
    <property type="match status" value="1"/>
</dbReference>
<evidence type="ECO:0000250" key="1"/>
<evidence type="ECO:0000250" key="2">
    <source>
        <dbReference type="UniProtKB" id="Q9LYG3"/>
    </source>
</evidence>
<evidence type="ECO:0000269" key="3">
    <source>
    </source>
</evidence>
<evidence type="ECO:0000269" key="4">
    <source>
    </source>
</evidence>
<evidence type="ECO:0000305" key="5"/>
<name>MAOP3_ARATH</name>
<organism>
    <name type="scientific">Arabidopsis thaliana</name>
    <name type="common">Mouse-ear cress</name>
    <dbReference type="NCBI Taxonomy" id="3702"/>
    <lineage>
        <taxon>Eukaryota</taxon>
        <taxon>Viridiplantae</taxon>
        <taxon>Streptophyta</taxon>
        <taxon>Embryophyta</taxon>
        <taxon>Tracheophyta</taxon>
        <taxon>Spermatophyta</taxon>
        <taxon>Magnoliopsida</taxon>
        <taxon>eudicotyledons</taxon>
        <taxon>Gunneridae</taxon>
        <taxon>Pentapetalae</taxon>
        <taxon>rosids</taxon>
        <taxon>malvids</taxon>
        <taxon>Brassicales</taxon>
        <taxon>Brassicaceae</taxon>
        <taxon>Camelineae</taxon>
        <taxon>Arabidopsis</taxon>
    </lineage>
</organism>
<sequence length="588" mass="64610">MGTNQTQISDEYVTGNSSGVGGGISDVYGEDSATLDQLVTPWVTSVASGYTLMRDPRYNKGLAFTDKERDAHYITGLLPPVVLSQDVQERKVMHNLRQYTVPLQRYMALMDLQERNERLFYKLLIDNVEELLPVVYTPTVGEACQKYGSIYRRPQGLYISLKEKGKILEVLKNWPQRGIQVIVVTDGERILGLGDLGCQGMGIPVGKLSLYTALGGIRPSACLPITIDVGTNNEKLLNNEFYIGLKQKRANGEEYAEFLQEFMCAVKQNYGEKVLVQFEDFANHHAFELLSKYCSSHLVFNDDIQGTASVVLAGLIAAQKVLGKSLADHTFLFLGAGEAGTGIAELIALKISKETGKPIDETRKKIWLVDSKGLIVSERKESLQHFKQPWAHDHKPVKELLAAVNAIKPTVLIGTSGVGKTFTKEVVEAMATLNEKPLILALSNPTSQAECTAEEAYTWTKGRAIFASGSPFDPVQYDGKKFTPGQANNCYIFPGLGLGLIMSGAIRVRDDMLLAASEALASQVTEENFANGLIYPPFANIRKISANIAASVGAKTYELGLASNLPRPKDLVKMAESCMYSPVYRNFR</sequence>
<keyword id="KW-0007">Acetylation</keyword>
<keyword id="KW-0963">Cytoplasm</keyword>
<keyword id="KW-0479">Metal-binding</keyword>
<keyword id="KW-0521">NADP</keyword>
<keyword id="KW-0560">Oxidoreductase</keyword>
<keyword id="KW-1185">Reference proteome</keyword>
<gene>
    <name type="primary">NADP-ME3</name>
    <name type="ordered locus">At5g25880</name>
    <name type="ORF">T1N24.25</name>
</gene>
<reference key="1">
    <citation type="journal article" date="2000" name="Nature">
        <title>Sequence and analysis of chromosome 5 of the plant Arabidopsis thaliana.</title>
        <authorList>
            <person name="Tabata S."/>
            <person name="Kaneko T."/>
            <person name="Nakamura Y."/>
            <person name="Kotani H."/>
            <person name="Kato T."/>
            <person name="Asamizu E."/>
            <person name="Miyajima N."/>
            <person name="Sasamoto S."/>
            <person name="Kimura T."/>
            <person name="Hosouchi T."/>
            <person name="Kawashima K."/>
            <person name="Kohara M."/>
            <person name="Matsumoto M."/>
            <person name="Matsuno A."/>
            <person name="Muraki A."/>
            <person name="Nakayama S."/>
            <person name="Nakazaki N."/>
            <person name="Naruo K."/>
            <person name="Okumura S."/>
            <person name="Shinpo S."/>
            <person name="Takeuchi C."/>
            <person name="Wada T."/>
            <person name="Watanabe A."/>
            <person name="Yamada M."/>
            <person name="Yasuda M."/>
            <person name="Sato S."/>
            <person name="de la Bastide M."/>
            <person name="Huang E."/>
            <person name="Spiegel L."/>
            <person name="Gnoj L."/>
            <person name="O'Shaughnessy A."/>
            <person name="Preston R."/>
            <person name="Habermann K."/>
            <person name="Murray J."/>
            <person name="Johnson D."/>
            <person name="Rohlfing T."/>
            <person name="Nelson J."/>
            <person name="Stoneking T."/>
            <person name="Pepin K."/>
            <person name="Spieth J."/>
            <person name="Sekhon M."/>
            <person name="Armstrong J."/>
            <person name="Becker M."/>
            <person name="Belter E."/>
            <person name="Cordum H."/>
            <person name="Cordes M."/>
            <person name="Courtney L."/>
            <person name="Courtney W."/>
            <person name="Dante M."/>
            <person name="Du H."/>
            <person name="Edwards J."/>
            <person name="Fryman J."/>
            <person name="Haakensen B."/>
            <person name="Lamar E."/>
            <person name="Latreille P."/>
            <person name="Leonard S."/>
            <person name="Meyer R."/>
            <person name="Mulvaney E."/>
            <person name="Ozersky P."/>
            <person name="Riley A."/>
            <person name="Strowmatt C."/>
            <person name="Wagner-McPherson C."/>
            <person name="Wollam A."/>
            <person name="Yoakum M."/>
            <person name="Bell M."/>
            <person name="Dedhia N."/>
            <person name="Parnell L."/>
            <person name="Shah R."/>
            <person name="Rodriguez M."/>
            <person name="Hoon See L."/>
            <person name="Vil D."/>
            <person name="Baker J."/>
            <person name="Kirchoff K."/>
            <person name="Toth K."/>
            <person name="King L."/>
            <person name="Bahret A."/>
            <person name="Miller B."/>
            <person name="Marra M.A."/>
            <person name="Martienssen R."/>
            <person name="McCombie W.R."/>
            <person name="Wilson R.K."/>
            <person name="Murphy G."/>
            <person name="Bancroft I."/>
            <person name="Volckaert G."/>
            <person name="Wambutt R."/>
            <person name="Duesterhoeft A."/>
            <person name="Stiekema W."/>
            <person name="Pohl T."/>
            <person name="Entian K.-D."/>
            <person name="Terryn N."/>
            <person name="Hartley N."/>
            <person name="Bent E."/>
            <person name="Johnson S."/>
            <person name="Langham S.-A."/>
            <person name="McCullagh B."/>
            <person name="Robben J."/>
            <person name="Grymonprez B."/>
            <person name="Zimmermann W."/>
            <person name="Ramsperger U."/>
            <person name="Wedler H."/>
            <person name="Balke K."/>
            <person name="Wedler E."/>
            <person name="Peters S."/>
            <person name="van Staveren M."/>
            <person name="Dirkse W."/>
            <person name="Mooijman P."/>
            <person name="Klein Lankhorst R."/>
            <person name="Weitzenegger T."/>
            <person name="Bothe G."/>
            <person name="Rose M."/>
            <person name="Hauf J."/>
            <person name="Berneiser S."/>
            <person name="Hempel S."/>
            <person name="Feldpausch M."/>
            <person name="Lamberth S."/>
            <person name="Villarroel R."/>
            <person name="Gielen J."/>
            <person name="Ardiles W."/>
            <person name="Bents O."/>
            <person name="Lemcke K."/>
            <person name="Kolesov G."/>
            <person name="Mayer K.F.X."/>
            <person name="Rudd S."/>
            <person name="Schoof H."/>
            <person name="Schueller C."/>
            <person name="Zaccaria P."/>
            <person name="Mewes H.-W."/>
            <person name="Bevan M."/>
            <person name="Fransz P.F."/>
        </authorList>
    </citation>
    <scope>NUCLEOTIDE SEQUENCE [LARGE SCALE GENOMIC DNA]</scope>
    <source>
        <strain>cv. Columbia</strain>
    </source>
</reference>
<reference key="2">
    <citation type="journal article" date="2017" name="Plant J.">
        <title>Araport11: a complete reannotation of the Arabidopsis thaliana reference genome.</title>
        <authorList>
            <person name="Cheng C.Y."/>
            <person name="Krishnakumar V."/>
            <person name="Chan A.P."/>
            <person name="Thibaud-Nissen F."/>
            <person name="Schobel S."/>
            <person name="Town C.D."/>
        </authorList>
    </citation>
    <scope>GENOME REANNOTATION</scope>
    <source>
        <strain>cv. Columbia</strain>
    </source>
</reference>
<reference key="3">
    <citation type="journal article" date="2005" name="Plant Physiol.">
        <title>A comprehensive analysis of the NADP-malic enzyme gene family of Arabidopsis.</title>
        <authorList>
            <person name="Wheeler M.C."/>
            <person name="Tronconi M.A."/>
            <person name="Drincovich M.F."/>
            <person name="Andreo C.S."/>
            <person name="Fluegge U.-I."/>
            <person name="Maurino V.G."/>
        </authorList>
    </citation>
    <scope>DEVELOPMENTAL STAGE</scope>
    <scope>TISSUE SPECIFICITY</scope>
    <scope>CATALYTIC ACTIVITY</scope>
    <scope>BIOPHYSICOCHEMICAL PROPERTIES</scope>
    <scope>SUBUNIT</scope>
    <scope>GENE FAMILY</scope>
    <scope>NOMENCLATURE</scope>
    <source>
        <strain>cv. Columbia</strain>
    </source>
</reference>
<reference key="4">
    <citation type="journal article" date="2009" name="FEBS J.">
        <title>Identification of domains involved in the allosteric regulation of cytosolic Arabidopsis thaliana NADP-malic enzymes.</title>
        <authorList>
            <person name="Gerrard Wheeler M.C."/>
            <person name="Arias C.L."/>
            <person name="Maurino V.G."/>
            <person name="Andreo C.S."/>
            <person name="Drincovich M.F."/>
        </authorList>
    </citation>
    <scope>SUBCELLULAR LOCATION</scope>
    <scope>ACTIVITY REGULATION</scope>
    <scope>BIOPHYSICOCHEMICAL PROPERTIES</scope>
</reference>
<accession>Q9XGZ0</accession>
<protein>
    <recommendedName>
        <fullName>NADP-dependent malic enzyme 3</fullName>
        <shortName>AtNADP-ME3</shortName>
        <shortName>NADP-malic enzyme 3</shortName>
        <ecNumber>1.1.1.40</ecNumber>
    </recommendedName>
</protein>
<proteinExistence type="evidence at protein level"/>